<keyword id="KW-0325">Glycoprotein</keyword>
<keyword id="KW-0407">Ion channel</keyword>
<keyword id="KW-0406">Ion transport</keyword>
<keyword id="KW-0472">Membrane</keyword>
<keyword id="KW-0597">Phosphoprotein</keyword>
<keyword id="KW-1185">Reference proteome</keyword>
<keyword id="KW-0812">Transmembrane</keyword>
<keyword id="KW-1133">Transmembrane helix</keyword>
<keyword id="KW-0813">Transport</keyword>
<feature type="chain" id="PRO_0000187057" description="Calcium-activated potassium channel subunit beta-4">
    <location>
        <begin position="1"/>
        <end position="210"/>
    </location>
</feature>
<feature type="topological domain" description="Cytoplasmic" evidence="4">
    <location>
        <begin position="1"/>
        <end position="19"/>
    </location>
</feature>
<feature type="transmembrane region" description="Helical; Name=1" evidence="4">
    <location>
        <begin position="20"/>
        <end position="40"/>
    </location>
</feature>
<feature type="topological domain" description="Extracellular" evidence="4">
    <location>
        <begin position="41"/>
        <end position="167"/>
    </location>
</feature>
<feature type="transmembrane region" description="Helical; Name=2" evidence="4">
    <location>
        <begin position="168"/>
        <end position="188"/>
    </location>
</feature>
<feature type="topological domain" description="Cytoplasmic" evidence="4">
    <location>
        <begin position="189"/>
        <end position="210"/>
    </location>
</feature>
<feature type="glycosylation site" description="N-linked (GlcNAc...) asparagine" evidence="1">
    <location>
        <position position="53"/>
    </location>
</feature>
<feature type="glycosylation site" description="N-linked (GlcNAc...) asparagine" evidence="1">
    <location>
        <position position="90"/>
    </location>
</feature>
<dbReference type="EMBL" id="AB050637">
    <property type="protein sequence ID" value="BAB17595.1"/>
    <property type="molecule type" value="mRNA"/>
</dbReference>
<dbReference type="EMBL" id="AY028605">
    <property type="protein sequence ID" value="AAK21964.1"/>
    <property type="molecule type" value="mRNA"/>
</dbReference>
<dbReference type="RefSeq" id="NP_076450.1">
    <property type="nucleotide sequence ID" value="NM_023960.2"/>
</dbReference>
<dbReference type="SMR" id="Q9ESK8"/>
<dbReference type="FunCoup" id="Q9ESK8">
    <property type="interactions" value="1840"/>
</dbReference>
<dbReference type="STRING" id="10116.ENSRNOP00000075448"/>
<dbReference type="ChEMBL" id="CHEMBL4523667"/>
<dbReference type="GlyCosmos" id="Q9ESK8">
    <property type="glycosylation" value="2 sites, No reported glycans"/>
</dbReference>
<dbReference type="GlyGen" id="Q9ESK8">
    <property type="glycosylation" value="2 sites"/>
</dbReference>
<dbReference type="PhosphoSitePlus" id="Q9ESK8"/>
<dbReference type="PaxDb" id="10116-ENSRNOP00000038834"/>
<dbReference type="ABCD" id="Q9ESK8">
    <property type="antibodies" value="1 sequenced antibody"/>
</dbReference>
<dbReference type="Ensembl" id="ENSRNOT00000085579.2">
    <property type="protein sequence ID" value="ENSRNOP00000075448.1"/>
    <property type="gene ID" value="ENSRNOG00000054458.2"/>
</dbReference>
<dbReference type="GeneID" id="66016"/>
<dbReference type="KEGG" id="rno:66016"/>
<dbReference type="UCSC" id="RGD:620728">
    <property type="organism name" value="rat"/>
</dbReference>
<dbReference type="AGR" id="RGD:620728"/>
<dbReference type="CTD" id="27345"/>
<dbReference type="RGD" id="620728">
    <property type="gene designation" value="Kcnmb4"/>
</dbReference>
<dbReference type="eggNOG" id="ENOG502QR4Z">
    <property type="taxonomic scope" value="Eukaryota"/>
</dbReference>
<dbReference type="GeneTree" id="ENSGT00950000183039"/>
<dbReference type="HOGENOM" id="CLU_085739_0_0_1"/>
<dbReference type="InParanoid" id="Q9ESK8"/>
<dbReference type="OMA" id="PDDVLWQ"/>
<dbReference type="OrthoDB" id="9932001at2759"/>
<dbReference type="PhylomeDB" id="Q9ESK8"/>
<dbReference type="Reactome" id="R-RNO-1296052">
    <property type="pathway name" value="Ca2+ activated K+ channels"/>
</dbReference>
<dbReference type="PRO" id="PR:Q9ESK8"/>
<dbReference type="Proteomes" id="UP000002494">
    <property type="component" value="Chromosome 7"/>
</dbReference>
<dbReference type="Bgee" id="ENSRNOG00000054458">
    <property type="expression patterns" value="Expressed in frontal cortex and 15 other cell types or tissues"/>
</dbReference>
<dbReference type="ExpressionAtlas" id="Q9ESK8">
    <property type="expression patterns" value="baseline and differential"/>
</dbReference>
<dbReference type="GO" id="GO:0005886">
    <property type="term" value="C:plasma membrane"/>
    <property type="evidence" value="ECO:0000250"/>
    <property type="project" value="UniProtKB"/>
</dbReference>
<dbReference type="GO" id="GO:0008076">
    <property type="term" value="C:voltage-gated potassium channel complex"/>
    <property type="evidence" value="ECO:0000250"/>
    <property type="project" value="UniProtKB"/>
</dbReference>
<dbReference type="GO" id="GO:0015269">
    <property type="term" value="F:calcium-activated potassium channel activity"/>
    <property type="evidence" value="ECO:0000250"/>
    <property type="project" value="UniProtKB"/>
</dbReference>
<dbReference type="GO" id="GO:0015459">
    <property type="term" value="F:potassium channel regulator activity"/>
    <property type="evidence" value="ECO:0000318"/>
    <property type="project" value="GO_Central"/>
</dbReference>
<dbReference type="GO" id="GO:0099508">
    <property type="term" value="F:voltage-gated monoatomic ion channel activity involved in regulation of presynaptic membrane potential"/>
    <property type="evidence" value="ECO:0000314"/>
    <property type="project" value="SynGO"/>
</dbReference>
<dbReference type="GO" id="GO:0001508">
    <property type="term" value="P:action potential"/>
    <property type="evidence" value="ECO:0000250"/>
    <property type="project" value="UniProtKB"/>
</dbReference>
<dbReference type="GO" id="GO:0005513">
    <property type="term" value="P:detection of calcium ion"/>
    <property type="evidence" value="ECO:0000250"/>
    <property type="project" value="UniProtKB"/>
</dbReference>
<dbReference type="GO" id="GO:0019228">
    <property type="term" value="P:neuronal action potential"/>
    <property type="evidence" value="ECO:0000250"/>
    <property type="project" value="UniProtKB"/>
</dbReference>
<dbReference type="GO" id="GO:0006813">
    <property type="term" value="P:potassium ion transport"/>
    <property type="evidence" value="ECO:0000250"/>
    <property type="project" value="UniProtKB"/>
</dbReference>
<dbReference type="InterPro" id="IPR003930">
    <property type="entry name" value="K_chnl_Ca-activ_BK_bsu"/>
</dbReference>
<dbReference type="PANTHER" id="PTHR10258">
    <property type="entry name" value="CALCIUM-ACTIVATED POTASSIUM CHANNEL SUBUNIT BETA"/>
    <property type="match status" value="1"/>
</dbReference>
<dbReference type="PANTHER" id="PTHR10258:SF3">
    <property type="entry name" value="CALCIUM-ACTIVATED POTASSIUM CHANNEL SUBUNIT BETA-4"/>
    <property type="match status" value="1"/>
</dbReference>
<dbReference type="Pfam" id="PF03185">
    <property type="entry name" value="CaKB"/>
    <property type="match status" value="1"/>
</dbReference>
<evidence type="ECO:0000250" key="1"/>
<evidence type="ECO:0000250" key="2">
    <source>
        <dbReference type="UniProtKB" id="Q86W47"/>
    </source>
</evidence>
<evidence type="ECO:0000250" key="3">
    <source>
        <dbReference type="UniProtKB" id="Q9JIN6"/>
    </source>
</evidence>
<evidence type="ECO:0000255" key="4"/>
<evidence type="ECO:0000305" key="5"/>
<protein>
    <recommendedName>
        <fullName>Calcium-activated potassium channel subunit beta-4</fullName>
    </recommendedName>
    <alternativeName>
        <fullName>BK channel subunit beta-4</fullName>
        <shortName>BKbeta4</shortName>
    </alternativeName>
    <alternativeName>
        <fullName>Calcium-activated potassium channel, subfamily M subunit beta-4</fullName>
    </alternativeName>
    <alternativeName>
        <fullName>Charybdotoxin receptor subunit beta-4</fullName>
    </alternativeName>
    <alternativeName>
        <fullName>K(VCA)beta-4</fullName>
    </alternativeName>
    <alternativeName>
        <fullName>Maxi K channel subunit beta-4</fullName>
    </alternativeName>
    <alternativeName>
        <fullName>Slo-beta-4</fullName>
    </alternativeName>
</protein>
<proteinExistence type="evidence at transcript level"/>
<name>KCMB4_RAT</name>
<organism>
    <name type="scientific">Rattus norvegicus</name>
    <name type="common">Rat</name>
    <dbReference type="NCBI Taxonomy" id="10116"/>
    <lineage>
        <taxon>Eukaryota</taxon>
        <taxon>Metazoa</taxon>
        <taxon>Chordata</taxon>
        <taxon>Craniata</taxon>
        <taxon>Vertebrata</taxon>
        <taxon>Euteleostomi</taxon>
        <taxon>Mammalia</taxon>
        <taxon>Eutheria</taxon>
        <taxon>Euarchontoglires</taxon>
        <taxon>Glires</taxon>
        <taxon>Rodentia</taxon>
        <taxon>Myomorpha</taxon>
        <taxon>Muroidea</taxon>
        <taxon>Muridae</taxon>
        <taxon>Murinae</taxon>
        <taxon>Rattus</taxon>
    </lineage>
</organism>
<gene>
    <name type="primary">Kcnmb4</name>
</gene>
<accession>Q9ESK8</accession>
<reference key="1">
    <citation type="submission" date="2000-10" db="EMBL/GenBank/DDBJ databases">
        <title>Rat calcium activated potassium channel beta 4 subunit (KCNMB4).</title>
        <authorList>
            <person name="Ohya S."/>
            <person name="Ohi Y."/>
            <person name="Imaizumi Y."/>
        </authorList>
    </citation>
    <scope>NUCLEOTIDE SEQUENCE [MRNA]</scope>
    <source>
        <tissue>Brain</tissue>
    </source>
</reference>
<reference key="2">
    <citation type="submission" date="2001-03" db="EMBL/GenBank/DDBJ databases">
        <title>Molecular cloning of large-conductance calcium-activated potassium channel beta 4 subunit from rat brain.</title>
        <authorList>
            <person name="Ha T.S."/>
            <person name="Park C.-S."/>
        </authorList>
    </citation>
    <scope>NUCLEOTIDE SEQUENCE [MRNA]</scope>
</reference>
<sequence>MAKLRVSYEYTEAEDKSIRLGLFLIVSGILSLFIFGFCWLSPALQDLQATAANCTVLSVQQIGEVFECTFTCGTDCRGTSQYPCVQVYVNNSESNSRALLHSDQHQLLTNPKCSYIPPCKRENQKNSESVMNWQQYWKDEIGSQPFTCYFNQHQRPEDVLLQRTHDEIVLLHCFLWPVVAFVVGVLIVVLTICAKSLAVKAEAMKKRKFS</sequence>
<comment type="function">
    <text evidence="1">Regulatory subunit of the calcium activated potassium KCNMA1 (maxiK) channel. Modulates the calcium sensitivity and gating kinetics of KCNMA1, thereby contributing to KCNMA1 channel diversity. Decreases the gating kinetics and calcium sensitivity of the KCNMA1 channel, but with fast deactivation kinetics. May decrease KCNMA1 channel openings at low calcium concentrations but increases channel openings at high calcium concentrations. Makes KCNMA1 channel resistant to 100 nM charybdotoxin (CTX) toxin concentrations (By similarity).</text>
</comment>
<comment type="subunit">
    <text evidence="2 3">Interacts with KCNMA1 tetramer. There are probably 4 molecules of KCMNB4 per KCNMA1 tetramer. Interacts with FMR1 (via N-terminus).</text>
</comment>
<comment type="subcellular location">
    <subcellularLocation>
        <location evidence="1">Membrane</location>
        <topology evidence="1">Multi-pass membrane protein</topology>
    </subcellularLocation>
</comment>
<comment type="domain">
    <text evidence="1">Resistance to charybdotoxin (CTX) toxin is mediated by the extracellular domain.</text>
</comment>
<comment type="PTM">
    <text evidence="1">Phosphorylated. Phosphorylation modulates its effect on KCNMA1 activation kinetics (By similarity).</text>
</comment>
<comment type="PTM">
    <text evidence="1">N-glycosylated. A highly glycosylated form is promoted by KCNMA1. Glycosylation, which is not required for the interaction with KCNMA1 and subcellular location, increases protection against charybdotoxin (By similarity).</text>
</comment>
<comment type="similarity">
    <text evidence="5">Belongs to the KCNMB (TC 8.A.14.1) family. KCNMB4 subfamily.</text>
</comment>